<comment type="function">
    <text evidence="1">Delta-conotoxins bind to site 6 of voltage-gated sodium channels (Nav) and inhibit the inactivation process.</text>
</comment>
<comment type="subcellular location">
    <subcellularLocation>
        <location>Secreted</location>
    </subcellularLocation>
</comment>
<comment type="tissue specificity">
    <text>Expressed by the venom duct.</text>
</comment>
<comment type="domain">
    <text evidence="1">The presence of a 'disulfide through disulfide knot' structurally defines this protein as a knottin.</text>
</comment>
<comment type="domain">
    <text>The cysteine framework is VI/VII (C-C-CC-C-C).</text>
</comment>
<comment type="similarity">
    <text evidence="4">Belongs to the conotoxin O1 superfamily.</text>
</comment>
<evidence type="ECO:0000250" key="1"/>
<evidence type="ECO:0000255" key="2"/>
<evidence type="ECO:0000269" key="3">
    <source>
    </source>
</evidence>
<evidence type="ECO:0000305" key="4"/>
<keyword id="KW-0165">Cleavage on pair of basic residues</keyword>
<keyword id="KW-0903">Direct protein sequencing</keyword>
<keyword id="KW-1015">Disulfide bond</keyword>
<keyword id="KW-0379">Hydroxylation</keyword>
<keyword id="KW-0872">Ion channel impairing toxin</keyword>
<keyword id="KW-0960">Knottin</keyword>
<keyword id="KW-0528">Neurotoxin</keyword>
<keyword id="KW-0964">Secreted</keyword>
<keyword id="KW-0732">Signal</keyword>
<keyword id="KW-0800">Toxin</keyword>
<keyword id="KW-0738">Voltage-gated sodium channel impairing toxin</keyword>
<organism>
    <name type="scientific">Conus achatinus</name>
    <name type="common">Little frog cone</name>
    <dbReference type="NCBI Taxonomy" id="369967"/>
    <lineage>
        <taxon>Eukaryota</taxon>
        <taxon>Metazoa</taxon>
        <taxon>Spiralia</taxon>
        <taxon>Lophotrochozoa</taxon>
        <taxon>Mollusca</taxon>
        <taxon>Gastropoda</taxon>
        <taxon>Caenogastropoda</taxon>
        <taxon>Neogastropoda</taxon>
        <taxon>Conoidea</taxon>
        <taxon>Conidae</taxon>
        <taxon>Conus</taxon>
        <taxon>Pionoconus</taxon>
    </lineage>
</organism>
<protein>
    <recommendedName>
        <fullName>Delta-conotoxin-like Ac6.2</fullName>
    </recommendedName>
</protein>
<name>O162_CONAH</name>
<sequence length="83" mass="9397">MKLTCVVIVAVLFLTAWTFVTADDSRYGLKNLFPKARHEMKNPEASKLNKRDECYPPGTFCGIKPGLCCSERCFPFVCLSLEF</sequence>
<accession>P0C8V6</accession>
<feature type="signal peptide" evidence="2">
    <location>
        <begin position="1"/>
        <end position="22"/>
    </location>
</feature>
<feature type="propeptide" id="PRO_0000366085" evidence="3">
    <location>
        <begin position="23"/>
        <end position="51"/>
    </location>
</feature>
<feature type="peptide" id="PRO_0000366086" description="Delta-conotoxin-like Ac6.2">
    <location>
        <begin position="52"/>
        <end position="83"/>
    </location>
</feature>
<feature type="modified residue" description="4-hydroxyproline" evidence="3">
    <location>
        <position position="57"/>
    </location>
</feature>
<feature type="modified residue" description="4-hydroxyproline" evidence="3">
    <location>
        <position position="65"/>
    </location>
</feature>
<feature type="disulfide bond" evidence="1">
    <location>
        <begin position="54"/>
        <end position="69"/>
    </location>
</feature>
<feature type="disulfide bond" evidence="1">
    <location>
        <begin position="61"/>
        <end position="73"/>
    </location>
</feature>
<feature type="disulfide bond" evidence="1">
    <location>
        <begin position="68"/>
        <end position="78"/>
    </location>
</feature>
<dbReference type="SMR" id="P0C8V6"/>
<dbReference type="ConoServer" id="3707">
    <property type="toxin name" value="Ac6.2 precursor"/>
</dbReference>
<dbReference type="GO" id="GO:0005576">
    <property type="term" value="C:extracellular region"/>
    <property type="evidence" value="ECO:0007669"/>
    <property type="project" value="UniProtKB-SubCell"/>
</dbReference>
<dbReference type="GO" id="GO:0019871">
    <property type="term" value="F:sodium channel inhibitor activity"/>
    <property type="evidence" value="ECO:0007669"/>
    <property type="project" value="InterPro"/>
</dbReference>
<dbReference type="GO" id="GO:0090729">
    <property type="term" value="F:toxin activity"/>
    <property type="evidence" value="ECO:0007669"/>
    <property type="project" value="UniProtKB-KW"/>
</dbReference>
<dbReference type="InterPro" id="IPR004214">
    <property type="entry name" value="Conotoxin"/>
</dbReference>
<dbReference type="InterPro" id="IPR012322">
    <property type="entry name" value="Conotoxin_d-typ_CS"/>
</dbReference>
<dbReference type="Pfam" id="PF02950">
    <property type="entry name" value="Conotoxin"/>
    <property type="match status" value="1"/>
</dbReference>
<dbReference type="PROSITE" id="PS60005">
    <property type="entry name" value="DELTA_CONOTOXIN"/>
    <property type="match status" value="1"/>
</dbReference>
<reference key="1">
    <citation type="journal article" date="2008" name="J. Mass Spectrom.">
        <title>Probing peptide libraries from Conus achatinus using mass spectrometry and cDNA sequencing: identification of delta and omega-conotoxins.</title>
        <authorList>
            <person name="Gowd K.H."/>
            <person name="Dewan K.K."/>
            <person name="Iengar P."/>
            <person name="Krishnan K.S."/>
            <person name="Balaram P."/>
        </authorList>
    </citation>
    <scope>NUCLEOTIDE SEQUENCE [MRNA]</scope>
    <scope>PROTEIN SEQUENCE OF 52-83</scope>
    <scope>HYDROXYLATION AT PRO-57 AND PRO-65</scope>
    <scope>IDENTIFICATION BY MASS SPECTROMETRY</scope>
    <source>
        <tissue>Venom</tissue>
        <tissue>Venom duct</tissue>
    </source>
</reference>
<proteinExistence type="evidence at protein level"/>